<organism>
    <name type="scientific">Mycobacterium tuberculosis (strain ATCC 25177 / H37Ra)</name>
    <dbReference type="NCBI Taxonomy" id="419947"/>
    <lineage>
        <taxon>Bacteria</taxon>
        <taxon>Bacillati</taxon>
        <taxon>Actinomycetota</taxon>
        <taxon>Actinomycetes</taxon>
        <taxon>Mycobacteriales</taxon>
        <taxon>Mycobacteriaceae</taxon>
        <taxon>Mycobacterium</taxon>
        <taxon>Mycobacterium tuberculosis complex</taxon>
    </lineage>
</organism>
<dbReference type="EMBL" id="CP000611">
    <property type="protein sequence ID" value="ABQ72386.1"/>
    <property type="molecule type" value="Genomic_DNA"/>
</dbReference>
<dbReference type="RefSeq" id="WP_003403341.1">
    <property type="nucleotide sequence ID" value="NZ_CP016972.1"/>
</dbReference>
<dbReference type="SMR" id="A5U036"/>
<dbReference type="GeneID" id="45424611"/>
<dbReference type="KEGG" id="mra:MRA_0662"/>
<dbReference type="eggNOG" id="COG0244">
    <property type="taxonomic scope" value="Bacteria"/>
</dbReference>
<dbReference type="HOGENOM" id="CLU_092227_1_0_11"/>
<dbReference type="Proteomes" id="UP000001988">
    <property type="component" value="Chromosome"/>
</dbReference>
<dbReference type="GO" id="GO:0015934">
    <property type="term" value="C:large ribosomal subunit"/>
    <property type="evidence" value="ECO:0007669"/>
    <property type="project" value="InterPro"/>
</dbReference>
<dbReference type="GO" id="GO:0070180">
    <property type="term" value="F:large ribosomal subunit rRNA binding"/>
    <property type="evidence" value="ECO:0007669"/>
    <property type="project" value="UniProtKB-UniRule"/>
</dbReference>
<dbReference type="GO" id="GO:0003735">
    <property type="term" value="F:structural constituent of ribosome"/>
    <property type="evidence" value="ECO:0007669"/>
    <property type="project" value="InterPro"/>
</dbReference>
<dbReference type="GO" id="GO:0006412">
    <property type="term" value="P:translation"/>
    <property type="evidence" value="ECO:0007669"/>
    <property type="project" value="UniProtKB-UniRule"/>
</dbReference>
<dbReference type="CDD" id="cd05797">
    <property type="entry name" value="Ribosomal_L10"/>
    <property type="match status" value="1"/>
</dbReference>
<dbReference type="FunFam" id="3.30.70.1730:FF:000003">
    <property type="entry name" value="50S ribosomal protein L10"/>
    <property type="match status" value="1"/>
</dbReference>
<dbReference type="Gene3D" id="3.30.70.1730">
    <property type="match status" value="1"/>
</dbReference>
<dbReference type="Gene3D" id="6.10.250.290">
    <property type="match status" value="1"/>
</dbReference>
<dbReference type="HAMAP" id="MF_00362">
    <property type="entry name" value="Ribosomal_uL10"/>
    <property type="match status" value="1"/>
</dbReference>
<dbReference type="InterPro" id="IPR001790">
    <property type="entry name" value="Ribosomal_uL10"/>
</dbReference>
<dbReference type="InterPro" id="IPR043141">
    <property type="entry name" value="Ribosomal_uL10-like_sf"/>
</dbReference>
<dbReference type="InterPro" id="IPR022973">
    <property type="entry name" value="Ribosomal_uL10_bac"/>
</dbReference>
<dbReference type="InterPro" id="IPR047865">
    <property type="entry name" value="Ribosomal_uL10_bac_type"/>
</dbReference>
<dbReference type="InterPro" id="IPR002363">
    <property type="entry name" value="Ribosomal_uL10_CS_bac"/>
</dbReference>
<dbReference type="NCBIfam" id="NF000955">
    <property type="entry name" value="PRK00099.1-1"/>
    <property type="match status" value="1"/>
</dbReference>
<dbReference type="PANTHER" id="PTHR11560">
    <property type="entry name" value="39S RIBOSOMAL PROTEIN L10, MITOCHONDRIAL"/>
    <property type="match status" value="1"/>
</dbReference>
<dbReference type="Pfam" id="PF00466">
    <property type="entry name" value="Ribosomal_L10"/>
    <property type="match status" value="1"/>
</dbReference>
<dbReference type="SUPFAM" id="SSF160369">
    <property type="entry name" value="Ribosomal protein L10-like"/>
    <property type="match status" value="1"/>
</dbReference>
<dbReference type="PROSITE" id="PS01109">
    <property type="entry name" value="RIBOSOMAL_L10"/>
    <property type="match status" value="1"/>
</dbReference>
<feature type="chain" id="PRO_1000005540" description="Large ribosomal subunit protein uL10">
    <location>
        <begin position="1"/>
        <end position="178"/>
    </location>
</feature>
<sequence>MARADKATAVADIAAQFKESTATLITEYRGLTVANLAELRRSLTGSATYAVAKNTLIKRAASEAGIEGLDELFVGPTAIAFVTGEPVDAAKAIKTFAKEHKALVIKGGYMDGHPLTVAEVERIADLESREVLLAKLAGAMKGNLAKAAGLFNAPASQLARLAAALQEKKACPGPDSAE</sequence>
<keyword id="KW-1185">Reference proteome</keyword>
<keyword id="KW-0687">Ribonucleoprotein</keyword>
<keyword id="KW-0689">Ribosomal protein</keyword>
<keyword id="KW-0694">RNA-binding</keyword>
<keyword id="KW-0699">rRNA-binding</keyword>
<gene>
    <name evidence="1" type="primary">rplJ</name>
    <name type="ordered locus">MRA_0662</name>
</gene>
<proteinExistence type="inferred from homology"/>
<evidence type="ECO:0000255" key="1">
    <source>
        <dbReference type="HAMAP-Rule" id="MF_00362"/>
    </source>
</evidence>
<evidence type="ECO:0000305" key="2"/>
<name>RL10_MYCTA</name>
<accession>A5U036</accession>
<protein>
    <recommendedName>
        <fullName evidence="1">Large ribosomal subunit protein uL10</fullName>
    </recommendedName>
    <alternativeName>
        <fullName evidence="2">50S ribosomal protein L10</fullName>
    </alternativeName>
</protein>
<reference key="1">
    <citation type="journal article" date="2008" name="PLoS ONE">
        <title>Genetic basis of virulence attenuation revealed by comparative genomic analysis of Mycobacterium tuberculosis strain H37Ra versus H37Rv.</title>
        <authorList>
            <person name="Zheng H."/>
            <person name="Lu L."/>
            <person name="Wang B."/>
            <person name="Pu S."/>
            <person name="Zhang X."/>
            <person name="Zhu G."/>
            <person name="Shi W."/>
            <person name="Zhang L."/>
            <person name="Wang H."/>
            <person name="Wang S."/>
            <person name="Zhao G."/>
            <person name="Zhang Y."/>
        </authorList>
    </citation>
    <scope>NUCLEOTIDE SEQUENCE [LARGE SCALE GENOMIC DNA]</scope>
    <source>
        <strain>ATCC 25177 / H37Ra</strain>
    </source>
</reference>
<comment type="function">
    <text evidence="1">Forms part of the ribosomal stalk, playing a central role in the interaction of the ribosome with GTP-bound translation factors.</text>
</comment>
<comment type="subunit">
    <text evidence="1">Part of the ribosomal stalk of the 50S ribosomal subunit. The N-terminus interacts with L11 and the large rRNA to form the base of the stalk. The C-terminus forms an elongated spine to which L12 dimers bind in a sequential fashion forming a multimeric L10(L12)X complex.</text>
</comment>
<comment type="similarity">
    <text evidence="1">Belongs to the universal ribosomal protein uL10 family.</text>
</comment>